<organism evidence="6">
    <name type="scientific">Drosophila melanogaster</name>
    <name type="common">Fruit fly</name>
    <dbReference type="NCBI Taxonomy" id="7227"/>
    <lineage>
        <taxon>Eukaryota</taxon>
        <taxon>Metazoa</taxon>
        <taxon>Ecdysozoa</taxon>
        <taxon>Arthropoda</taxon>
        <taxon>Hexapoda</taxon>
        <taxon>Insecta</taxon>
        <taxon>Pterygota</taxon>
        <taxon>Neoptera</taxon>
        <taxon>Endopterygota</taxon>
        <taxon>Diptera</taxon>
        <taxon>Brachycera</taxon>
        <taxon>Muscomorpha</taxon>
        <taxon>Ephydroidea</taxon>
        <taxon>Drosophilidae</taxon>
        <taxon>Drosophila</taxon>
        <taxon>Sophophora</taxon>
    </lineage>
</organism>
<dbReference type="EMBL" id="AE013599">
    <property type="protein sequence ID" value="AAF57735.1"/>
    <property type="molecule type" value="Genomic_DNA"/>
</dbReference>
<dbReference type="EMBL" id="AY070887">
    <property type="protein sequence ID" value="AAL48509.1"/>
    <property type="molecule type" value="mRNA"/>
</dbReference>
<dbReference type="RefSeq" id="NP_611300.2">
    <property type="nucleotide sequence ID" value="NM_137456.3"/>
</dbReference>
<dbReference type="SMR" id="A1YK02"/>
<dbReference type="ComplexPortal" id="CPX-2568">
    <property type="entry name" value="Nuclear pore complex"/>
</dbReference>
<dbReference type="FunCoup" id="A1YK02">
    <property type="interactions" value="2252"/>
</dbReference>
<dbReference type="IntAct" id="A1YK02">
    <property type="interactions" value="2"/>
</dbReference>
<dbReference type="STRING" id="7227.FBpp0085954"/>
<dbReference type="PaxDb" id="7227-FBpp0085954"/>
<dbReference type="EnsemblMetazoa" id="FBtr0086775">
    <property type="protein sequence ID" value="FBpp0085954"/>
    <property type="gene ID" value="FBgn0034310"/>
</dbReference>
<dbReference type="GeneID" id="37078"/>
<dbReference type="KEGG" id="dme:Dmel_CG5733"/>
<dbReference type="UCSC" id="CG5733-RA">
    <property type="organism name" value="d. melanogaster"/>
</dbReference>
<dbReference type="AGR" id="FB:FBgn0034310"/>
<dbReference type="CTD" id="37078"/>
<dbReference type="FlyBase" id="FBgn0034310">
    <property type="gene designation" value="Nup75"/>
</dbReference>
<dbReference type="VEuPathDB" id="VectorBase:FBgn0034310"/>
<dbReference type="eggNOG" id="KOG2271">
    <property type="taxonomic scope" value="Eukaryota"/>
</dbReference>
<dbReference type="HOGENOM" id="CLU_027342_0_0_1"/>
<dbReference type="InParanoid" id="A1YK02"/>
<dbReference type="OMA" id="ELMEWLN"/>
<dbReference type="OrthoDB" id="17644at2759"/>
<dbReference type="PhylomeDB" id="A1YK02"/>
<dbReference type="Reactome" id="R-DME-159227">
    <property type="pathway name" value="Transport of the SLBP independent Mature mRNA"/>
</dbReference>
<dbReference type="Reactome" id="R-DME-159230">
    <property type="pathway name" value="Transport of the SLBP Dependant Mature mRNA"/>
</dbReference>
<dbReference type="Reactome" id="R-DME-159231">
    <property type="pathway name" value="Transport of Mature mRNA Derived from an Intronless Transcript"/>
</dbReference>
<dbReference type="Reactome" id="R-DME-159236">
    <property type="pathway name" value="Transport of Mature mRNA derived from an Intron-Containing Transcript"/>
</dbReference>
<dbReference type="Reactome" id="R-DME-3108214">
    <property type="pathway name" value="SUMOylation of DNA damage response and repair proteins"/>
</dbReference>
<dbReference type="Reactome" id="R-DME-3301854">
    <property type="pathway name" value="Nuclear Pore Complex (NPC) Disassembly"/>
</dbReference>
<dbReference type="Reactome" id="R-DME-4085377">
    <property type="pathway name" value="SUMOylation of SUMOylation proteins"/>
</dbReference>
<dbReference type="Reactome" id="R-DME-4551638">
    <property type="pathway name" value="SUMOylation of chromatin organization proteins"/>
</dbReference>
<dbReference type="Reactome" id="R-DME-4615885">
    <property type="pathway name" value="SUMOylation of DNA replication proteins"/>
</dbReference>
<dbReference type="Reactome" id="R-DME-5578749">
    <property type="pathway name" value="Transcriptional regulation by small RNAs"/>
</dbReference>
<dbReference type="Reactome" id="R-DME-9615933">
    <property type="pathway name" value="Postmitotic nuclear pore complex (NPC) reformation"/>
</dbReference>
<dbReference type="SignaLink" id="A1YK02"/>
<dbReference type="BioGRID-ORCS" id="37078">
    <property type="hits" value="1 hit in 1 CRISPR screen"/>
</dbReference>
<dbReference type="CD-CODE" id="2838EF58">
    <property type="entry name" value="Centrosome"/>
</dbReference>
<dbReference type="ChiTaRS" id="Nup75">
    <property type="organism name" value="fly"/>
</dbReference>
<dbReference type="GenomeRNAi" id="37078"/>
<dbReference type="PRO" id="PR:A1YK02"/>
<dbReference type="Proteomes" id="UP000000803">
    <property type="component" value="Chromosome 2R"/>
</dbReference>
<dbReference type="Bgee" id="FBgn0034310">
    <property type="expression patterns" value="Expressed in embryonic/larval hemocyte (Drosophila) and 49 other cell types or tissues"/>
</dbReference>
<dbReference type="ExpressionAtlas" id="A1YK02">
    <property type="expression patterns" value="baseline and differential"/>
</dbReference>
<dbReference type="GO" id="GO:0031965">
    <property type="term" value="C:nuclear membrane"/>
    <property type="evidence" value="ECO:0007669"/>
    <property type="project" value="UniProtKB-SubCell"/>
</dbReference>
<dbReference type="GO" id="GO:0031080">
    <property type="term" value="C:nuclear pore outer ring"/>
    <property type="evidence" value="ECO:0000250"/>
    <property type="project" value="FlyBase"/>
</dbReference>
<dbReference type="GO" id="GO:0017056">
    <property type="term" value="F:structural constituent of nuclear pore"/>
    <property type="evidence" value="ECO:0000250"/>
    <property type="project" value="FlyBase"/>
</dbReference>
<dbReference type="GO" id="GO:0006406">
    <property type="term" value="P:mRNA export from nucleus"/>
    <property type="evidence" value="ECO:0000250"/>
    <property type="project" value="FlyBase"/>
</dbReference>
<dbReference type="GO" id="GO:0045893">
    <property type="term" value="P:positive regulation of DNA-templated transcription"/>
    <property type="evidence" value="ECO:0000318"/>
    <property type="project" value="GO_Central"/>
</dbReference>
<dbReference type="GO" id="GO:0006606">
    <property type="term" value="P:protein import into nucleus"/>
    <property type="evidence" value="ECO:0000315"/>
    <property type="project" value="FlyBase"/>
</dbReference>
<dbReference type="InterPro" id="IPR011502">
    <property type="entry name" value="Nucleoporin_Nup85"/>
</dbReference>
<dbReference type="PANTHER" id="PTHR13373">
    <property type="entry name" value="FROUNT PROTEIN-RELATED"/>
    <property type="match status" value="1"/>
</dbReference>
<dbReference type="PANTHER" id="PTHR13373:SF21">
    <property type="entry name" value="NUCLEAR PORE COMPLEX PROTEIN NUP85"/>
    <property type="match status" value="1"/>
</dbReference>
<dbReference type="Pfam" id="PF07575">
    <property type="entry name" value="Nucleopor_Nup85"/>
    <property type="match status" value="1"/>
</dbReference>
<name>NUP75_DROME</name>
<accession>A1YK02</accession>
<accession>Q8SZH5</accession>
<sequence length="668" mass="76872">MSDSGVFAFELGDDLATRCGNTLTGVFVPGSRIALSAYRHVTHSSRDEPTENAGQVPVLIYMAQESTLFDEPVLRSVLAEANATFATLQQLGSRATRAEYVNISRAYRSIVRSCLEKLEQAKKSPEVQTDEARLQRLCDAIVVFYAAECLWHLFEILYIQSNQLVVPQLLDWARFHSPHAEDRATDLLLMGEEASESDDYWSIVKSLIMLGEIDVTRAVLSQNRKAGQTSFKAAEQILKSMPVYQEGYALQKFHSQWEFWHVDTERKIQSGLFATEPELEQLIRLVAGDSEQWDAGIKESQDFYEYLPGYLLFTKPTCKPFELKIAAAKWLNRWCLLRPEREQCSMNRMVSQLMDHDLRLFIYDAQKLNDTHWFSTHLIDLIHHCGQLKSYFDQNNIDLPALRHSMIYEYGSYLMTSHNMWQLGIDYLDCCKQEGQAAIELLLPRITLRSERQATKLINLARQRGLISVEREICKVLSKRSYDNERYGNALEWAIRSKDVLLVTAVADFILKHYSKTGCMLCPDTIANVGGRMFASPRLVFLSKYFEFYEFYRTRDFLSASELLVNLLESKITPDYFWPSLLIDSMPLLESKDPKIFAKETVAILHHIETDLVPIIERDVSKYGKHHTETVFKDYRVENVDEIMNLLRLACARNLARALIIENTLPVV</sequence>
<reference evidence="6" key="1">
    <citation type="journal article" date="2000" name="Science">
        <title>The genome sequence of Drosophila melanogaster.</title>
        <authorList>
            <person name="Adams M.D."/>
            <person name="Celniker S.E."/>
            <person name="Holt R.A."/>
            <person name="Evans C.A."/>
            <person name="Gocayne J.D."/>
            <person name="Amanatides P.G."/>
            <person name="Scherer S.E."/>
            <person name="Li P.W."/>
            <person name="Hoskins R.A."/>
            <person name="Galle R.F."/>
            <person name="George R.A."/>
            <person name="Lewis S.E."/>
            <person name="Richards S."/>
            <person name="Ashburner M."/>
            <person name="Henderson S.N."/>
            <person name="Sutton G.G."/>
            <person name="Wortman J.R."/>
            <person name="Yandell M.D."/>
            <person name="Zhang Q."/>
            <person name="Chen L.X."/>
            <person name="Brandon R.C."/>
            <person name="Rogers Y.-H.C."/>
            <person name="Blazej R.G."/>
            <person name="Champe M."/>
            <person name="Pfeiffer B.D."/>
            <person name="Wan K.H."/>
            <person name="Doyle C."/>
            <person name="Baxter E.G."/>
            <person name="Helt G."/>
            <person name="Nelson C.R."/>
            <person name="Miklos G.L.G."/>
            <person name="Abril J.F."/>
            <person name="Agbayani A."/>
            <person name="An H.-J."/>
            <person name="Andrews-Pfannkoch C."/>
            <person name="Baldwin D."/>
            <person name="Ballew R.M."/>
            <person name="Basu A."/>
            <person name="Baxendale J."/>
            <person name="Bayraktaroglu L."/>
            <person name="Beasley E.M."/>
            <person name="Beeson K.Y."/>
            <person name="Benos P.V."/>
            <person name="Berman B.P."/>
            <person name="Bhandari D."/>
            <person name="Bolshakov S."/>
            <person name="Borkova D."/>
            <person name="Botchan M.R."/>
            <person name="Bouck J."/>
            <person name="Brokstein P."/>
            <person name="Brottier P."/>
            <person name="Burtis K.C."/>
            <person name="Busam D.A."/>
            <person name="Butler H."/>
            <person name="Cadieu E."/>
            <person name="Center A."/>
            <person name="Chandra I."/>
            <person name="Cherry J.M."/>
            <person name="Cawley S."/>
            <person name="Dahlke C."/>
            <person name="Davenport L.B."/>
            <person name="Davies P."/>
            <person name="de Pablos B."/>
            <person name="Delcher A."/>
            <person name="Deng Z."/>
            <person name="Mays A.D."/>
            <person name="Dew I."/>
            <person name="Dietz S.M."/>
            <person name="Dodson K."/>
            <person name="Doup L.E."/>
            <person name="Downes M."/>
            <person name="Dugan-Rocha S."/>
            <person name="Dunkov B.C."/>
            <person name="Dunn P."/>
            <person name="Durbin K.J."/>
            <person name="Evangelista C.C."/>
            <person name="Ferraz C."/>
            <person name="Ferriera S."/>
            <person name="Fleischmann W."/>
            <person name="Fosler C."/>
            <person name="Gabrielian A.E."/>
            <person name="Garg N.S."/>
            <person name="Gelbart W.M."/>
            <person name="Glasser K."/>
            <person name="Glodek A."/>
            <person name="Gong F."/>
            <person name="Gorrell J.H."/>
            <person name="Gu Z."/>
            <person name="Guan P."/>
            <person name="Harris M."/>
            <person name="Harris N.L."/>
            <person name="Harvey D.A."/>
            <person name="Heiman T.J."/>
            <person name="Hernandez J.R."/>
            <person name="Houck J."/>
            <person name="Hostin D."/>
            <person name="Houston K.A."/>
            <person name="Howland T.J."/>
            <person name="Wei M.-H."/>
            <person name="Ibegwam C."/>
            <person name="Jalali M."/>
            <person name="Kalush F."/>
            <person name="Karpen G.H."/>
            <person name="Ke Z."/>
            <person name="Kennison J.A."/>
            <person name="Ketchum K.A."/>
            <person name="Kimmel B.E."/>
            <person name="Kodira C.D."/>
            <person name="Kraft C.L."/>
            <person name="Kravitz S."/>
            <person name="Kulp D."/>
            <person name="Lai Z."/>
            <person name="Lasko P."/>
            <person name="Lei Y."/>
            <person name="Levitsky A.A."/>
            <person name="Li J.H."/>
            <person name="Li Z."/>
            <person name="Liang Y."/>
            <person name="Lin X."/>
            <person name="Liu X."/>
            <person name="Mattei B."/>
            <person name="McIntosh T.C."/>
            <person name="McLeod M.P."/>
            <person name="McPherson D."/>
            <person name="Merkulov G."/>
            <person name="Milshina N.V."/>
            <person name="Mobarry C."/>
            <person name="Morris J."/>
            <person name="Moshrefi A."/>
            <person name="Mount S.M."/>
            <person name="Moy M."/>
            <person name="Murphy B."/>
            <person name="Murphy L."/>
            <person name="Muzny D.M."/>
            <person name="Nelson D.L."/>
            <person name="Nelson D.R."/>
            <person name="Nelson K.A."/>
            <person name="Nixon K."/>
            <person name="Nusskern D.R."/>
            <person name="Pacleb J.M."/>
            <person name="Palazzolo M."/>
            <person name="Pittman G.S."/>
            <person name="Pan S."/>
            <person name="Pollard J."/>
            <person name="Puri V."/>
            <person name="Reese M.G."/>
            <person name="Reinert K."/>
            <person name="Remington K."/>
            <person name="Saunders R.D.C."/>
            <person name="Scheeler F."/>
            <person name="Shen H."/>
            <person name="Shue B.C."/>
            <person name="Siden-Kiamos I."/>
            <person name="Simpson M."/>
            <person name="Skupski M.P."/>
            <person name="Smith T.J."/>
            <person name="Spier E."/>
            <person name="Spradling A.C."/>
            <person name="Stapleton M."/>
            <person name="Strong R."/>
            <person name="Sun E."/>
            <person name="Svirskas R."/>
            <person name="Tector C."/>
            <person name="Turner R."/>
            <person name="Venter E."/>
            <person name="Wang A.H."/>
            <person name="Wang X."/>
            <person name="Wang Z.-Y."/>
            <person name="Wassarman D.A."/>
            <person name="Weinstock G.M."/>
            <person name="Weissenbach J."/>
            <person name="Williams S.M."/>
            <person name="Woodage T."/>
            <person name="Worley K.C."/>
            <person name="Wu D."/>
            <person name="Yang S."/>
            <person name="Yao Q.A."/>
            <person name="Ye J."/>
            <person name="Yeh R.-F."/>
            <person name="Zaveri J.S."/>
            <person name="Zhan M."/>
            <person name="Zhang G."/>
            <person name="Zhao Q."/>
            <person name="Zheng L."/>
            <person name="Zheng X.H."/>
            <person name="Zhong F.N."/>
            <person name="Zhong W."/>
            <person name="Zhou X."/>
            <person name="Zhu S.C."/>
            <person name="Zhu X."/>
            <person name="Smith H.O."/>
            <person name="Gibbs R.A."/>
            <person name="Myers E.W."/>
            <person name="Rubin G.M."/>
            <person name="Venter J.C."/>
        </authorList>
    </citation>
    <scope>NUCLEOTIDE SEQUENCE [LARGE SCALE GENOMIC DNA]</scope>
    <source>
        <strain evidence="6">Berkeley</strain>
    </source>
</reference>
<reference evidence="6" key="2">
    <citation type="journal article" date="2002" name="Genome Biol.">
        <title>Annotation of the Drosophila melanogaster euchromatic genome: a systematic review.</title>
        <authorList>
            <person name="Misra S."/>
            <person name="Crosby M.A."/>
            <person name="Mungall C.J."/>
            <person name="Matthews B.B."/>
            <person name="Campbell K.S."/>
            <person name="Hradecky P."/>
            <person name="Huang Y."/>
            <person name="Kaminker J.S."/>
            <person name="Millburn G.H."/>
            <person name="Prochnik S.E."/>
            <person name="Smith C.D."/>
            <person name="Tupy J.L."/>
            <person name="Whitfield E.J."/>
            <person name="Bayraktaroglu L."/>
            <person name="Berman B.P."/>
            <person name="Bettencourt B.R."/>
            <person name="Celniker S.E."/>
            <person name="de Grey A.D.N.J."/>
            <person name="Drysdale R.A."/>
            <person name="Harris N.L."/>
            <person name="Richter J."/>
            <person name="Russo S."/>
            <person name="Schroeder A.J."/>
            <person name="Shu S.Q."/>
            <person name="Stapleton M."/>
            <person name="Yamada C."/>
            <person name="Ashburner M."/>
            <person name="Gelbart W.M."/>
            <person name="Rubin G.M."/>
            <person name="Lewis S.E."/>
        </authorList>
    </citation>
    <scope>GENOME REANNOTATION</scope>
    <source>
        <strain evidence="6">Berkeley</strain>
    </source>
</reference>
<reference evidence="4" key="3">
    <citation type="journal article" date="2002" name="Genome Biol.">
        <title>A Drosophila full-length cDNA resource.</title>
        <authorList>
            <person name="Stapleton M."/>
            <person name="Carlson J.W."/>
            <person name="Brokstein P."/>
            <person name="Yu C."/>
            <person name="Champe M."/>
            <person name="George R.A."/>
            <person name="Guarin H."/>
            <person name="Kronmiller B."/>
            <person name="Pacleb J.M."/>
            <person name="Park S."/>
            <person name="Wan K.H."/>
            <person name="Rubin G.M."/>
            <person name="Celniker S.E."/>
        </authorList>
    </citation>
    <scope>NUCLEOTIDE SEQUENCE [LARGE SCALE MRNA]</scope>
    <source>
        <strain evidence="4">Berkeley</strain>
        <tissue evidence="4">Embryo</tissue>
    </source>
</reference>
<reference evidence="3" key="4">
    <citation type="journal article" date="2010" name="Mol. Cell. Biol.">
        <title>Specific nucleoporin requirement for Smad nuclear translocation.</title>
        <authorList>
            <person name="Chen X."/>
            <person name="Xu L."/>
        </authorList>
    </citation>
    <scope>FUNCTION</scope>
</reference>
<evidence type="ECO:0000250" key="1">
    <source>
        <dbReference type="UniProtKB" id="Q9BW27"/>
    </source>
</evidence>
<evidence type="ECO:0000269" key="2">
    <source>
    </source>
</evidence>
<evidence type="ECO:0000305" key="3"/>
<evidence type="ECO:0000312" key="4">
    <source>
        <dbReference type="EMBL" id="AAL48509.1"/>
    </source>
</evidence>
<evidence type="ECO:0000312" key="5">
    <source>
        <dbReference type="FlyBase" id="FBgn0034310"/>
    </source>
</evidence>
<evidence type="ECO:0000312" key="6">
    <source>
        <dbReference type="Proteomes" id="UP000000803"/>
    </source>
</evidence>
<feature type="chain" id="PRO_0000440961" description="Nuclear pore complex protein Nup75">
    <location>
        <begin position="1"/>
        <end position="668"/>
    </location>
</feature>
<feature type="sequence conflict" description="In Ref. 3; AAL48509." evidence="3" ref="3">
    <original>G</original>
    <variation>V</variation>
    <location>
        <position position="191"/>
    </location>
</feature>
<gene>
    <name evidence="5" type="primary">Nup75</name>
    <name evidence="5" type="ORF">CG5733</name>
</gene>
<keyword id="KW-0472">Membrane</keyword>
<keyword id="KW-0509">mRNA transport</keyword>
<keyword id="KW-0906">Nuclear pore complex</keyword>
<keyword id="KW-0539">Nucleus</keyword>
<keyword id="KW-0653">Protein transport</keyword>
<keyword id="KW-1185">Reference proteome</keyword>
<keyword id="KW-0811">Translocation</keyword>
<keyword id="KW-0813">Transport</keyword>
<comment type="function">
    <text evidence="1 2">Component of the nuclear pore complex (NPC) that seems to be required for NPC assembly and maintenance (By similarity). Required for nuclear import of phosphorylated Mad via importin msk (PubMed:20547758). Has no role in classical nuclear localization signal (cNLS)-dependent nuclear import via importin-beta (PubMed:20547758). Facilitates the interaction between Nup93 and sec13 with msk (PubMed:20547758).</text>
</comment>
<comment type="subunit">
    <text evidence="1">Component of the nuclear pore complex (NPC). Component of the NPC Nup107-160 subcomplex.</text>
</comment>
<comment type="subcellular location">
    <subcellularLocation>
        <location evidence="1">Nucleus</location>
        <location evidence="1">Nuclear pore complex</location>
    </subcellularLocation>
    <subcellularLocation>
        <location evidence="1">Nucleus membrane</location>
    </subcellularLocation>
</comment>
<comment type="similarity">
    <text evidence="3">Belongs to the nucleoporin Nup85 family.</text>
</comment>
<protein>
    <recommendedName>
        <fullName evidence="3">Nuclear pore complex protein Nup75</fullName>
    </recommendedName>
    <alternativeName>
        <fullName evidence="5">75 KDa Nucleoporin</fullName>
    </alternativeName>
    <alternativeName>
        <fullName evidence="5">Nucleoporin Nup75</fullName>
    </alternativeName>
    <alternativeName>
        <fullName evidence="3">Nucleoporin Nup85</fullName>
    </alternativeName>
</protein>
<proteinExistence type="evidence at transcript level"/>